<dbReference type="EC" id="1.14.16.1" evidence="4"/>
<dbReference type="EMBL" id="HQ003815">
    <property type="protein sequence ID" value="ADR30400.1"/>
    <property type="molecule type" value="mRNA"/>
</dbReference>
<dbReference type="EMBL" id="ABEU02000008">
    <property type="protein sequence ID" value="PNR49606.1"/>
    <property type="molecule type" value="Genomic_DNA"/>
</dbReference>
<dbReference type="SMR" id="E5KBU4"/>
<dbReference type="STRING" id="3218.E5KBU4"/>
<dbReference type="PaxDb" id="3218-PP1S184_99V6.1"/>
<dbReference type="EnsemblPlants" id="Pp3c8_13930V3.1">
    <property type="protein sequence ID" value="Pp3c8_13930V3.1"/>
    <property type="gene ID" value="Pp3c8_13930"/>
</dbReference>
<dbReference type="EnsemblPlants" id="Pp3c8_13930V3.2">
    <property type="protein sequence ID" value="Pp3c8_13930V3.2"/>
    <property type="gene ID" value="Pp3c8_13930"/>
</dbReference>
<dbReference type="EnsemblPlants" id="Pp3c8_13930V3.3">
    <property type="protein sequence ID" value="Pp3c8_13930V3.3"/>
    <property type="gene ID" value="Pp3c8_13930"/>
</dbReference>
<dbReference type="EnsemblPlants" id="Pp3c8_13930V3.4">
    <property type="protein sequence ID" value="Pp3c8_13930V3.4"/>
    <property type="gene ID" value="Pp3c8_13930"/>
</dbReference>
<dbReference type="Gramene" id="Pp3c8_13930V3.1">
    <property type="protein sequence ID" value="Pp3c8_13930V3.1"/>
    <property type="gene ID" value="Pp3c8_13930"/>
</dbReference>
<dbReference type="Gramene" id="Pp3c8_13930V3.2">
    <property type="protein sequence ID" value="Pp3c8_13930V3.2"/>
    <property type="gene ID" value="Pp3c8_13930"/>
</dbReference>
<dbReference type="Gramene" id="Pp3c8_13930V3.3">
    <property type="protein sequence ID" value="Pp3c8_13930V3.3"/>
    <property type="gene ID" value="Pp3c8_13930"/>
</dbReference>
<dbReference type="Gramene" id="Pp3c8_13930V3.4">
    <property type="protein sequence ID" value="Pp3c8_13930V3.4"/>
    <property type="gene ID" value="Pp3c8_13930"/>
</dbReference>
<dbReference type="HOGENOM" id="CLU_700953_0_0_1"/>
<dbReference type="InParanoid" id="E5KBU4"/>
<dbReference type="OMA" id="FHDEVYR"/>
<dbReference type="OrthoDB" id="983542at2759"/>
<dbReference type="BioCyc" id="MetaCyc:MONOMER-17817"/>
<dbReference type="Proteomes" id="UP000006727">
    <property type="component" value="Chromosome 8"/>
</dbReference>
<dbReference type="GO" id="GO:0009507">
    <property type="term" value="C:chloroplast"/>
    <property type="evidence" value="ECO:0007669"/>
    <property type="project" value="UniProtKB-SubCell"/>
</dbReference>
<dbReference type="GO" id="GO:0005506">
    <property type="term" value="F:iron ion binding"/>
    <property type="evidence" value="ECO:0007669"/>
    <property type="project" value="InterPro"/>
</dbReference>
<dbReference type="GO" id="GO:0004505">
    <property type="term" value="F:phenylalanine 4-monooxygenase activity"/>
    <property type="evidence" value="ECO:0007669"/>
    <property type="project" value="UniProtKB-EC"/>
</dbReference>
<dbReference type="GO" id="GO:0006559">
    <property type="term" value="P:L-phenylalanine catabolic process"/>
    <property type="evidence" value="ECO:0007669"/>
    <property type="project" value="UniProtKB-KW"/>
</dbReference>
<dbReference type="Gene3D" id="1.10.800.10">
    <property type="entry name" value="Aromatic amino acid hydroxylase"/>
    <property type="match status" value="1"/>
</dbReference>
<dbReference type="InterPro" id="IPR001273">
    <property type="entry name" value="ArAA_hydroxylase"/>
</dbReference>
<dbReference type="InterPro" id="IPR018301">
    <property type="entry name" value="ArAA_hydroxylase_Fe/CU_BS"/>
</dbReference>
<dbReference type="InterPro" id="IPR036951">
    <property type="entry name" value="ArAA_hydroxylase_sf"/>
</dbReference>
<dbReference type="InterPro" id="IPR036329">
    <property type="entry name" value="Aro-AA_hydroxylase_C_sf"/>
</dbReference>
<dbReference type="InterPro" id="IPR019774">
    <property type="entry name" value="Aromatic-AA_hydroxylase_C"/>
</dbReference>
<dbReference type="PANTHER" id="PTHR11473">
    <property type="entry name" value="AROMATIC AMINO ACID HYDROXYLASE"/>
    <property type="match status" value="1"/>
</dbReference>
<dbReference type="PANTHER" id="PTHR11473:SF24">
    <property type="entry name" value="PHENYLALANINE-4-HYDROXYLASE"/>
    <property type="match status" value="1"/>
</dbReference>
<dbReference type="Pfam" id="PF00351">
    <property type="entry name" value="Biopterin_H"/>
    <property type="match status" value="1"/>
</dbReference>
<dbReference type="PRINTS" id="PR00372">
    <property type="entry name" value="FYWHYDRXLASE"/>
</dbReference>
<dbReference type="SUPFAM" id="SSF56534">
    <property type="entry name" value="Aromatic aminoacid monoxygenases, catalytic and oligomerization domains"/>
    <property type="match status" value="1"/>
</dbReference>
<dbReference type="PROSITE" id="PS00367">
    <property type="entry name" value="BH4_AAA_HYDROXYL_1"/>
    <property type="match status" value="1"/>
</dbReference>
<dbReference type="PROSITE" id="PS51410">
    <property type="entry name" value="BH4_AAA_HYDROXYL_2"/>
    <property type="match status" value="1"/>
</dbReference>
<accession>E5KBU4</accession>
<reference key="1">
    <citation type="journal article" date="2010" name="Plant Cell">
        <title>Nonflowering plants possess a unique folate-dependent phenylalanine hydroxylase that is localized in chloroplasts.</title>
        <authorList>
            <person name="Pribat A."/>
            <person name="Noiriel A."/>
            <person name="Morse A.M."/>
            <person name="Davis J.M."/>
            <person name="Fouquet R."/>
            <person name="Loizeau K."/>
            <person name="Ravanel S."/>
            <person name="Frank W."/>
            <person name="Haas R."/>
            <person name="Reski R."/>
            <person name="Bedair M."/>
            <person name="Sumner L.W."/>
            <person name="Hanson A.D."/>
        </authorList>
    </citation>
    <scope>NUCLEOTIDE SEQUENCE [MRNA]</scope>
    <scope>FUNCTION</scope>
    <scope>CATALYTIC ACTIVITY</scope>
    <scope>COFACTOR</scope>
    <scope>BIOPHYSICOCHEMICAL PROPERTIES</scope>
    <scope>SUBUNIT</scope>
    <scope>SUBCELLULAR LOCATION</scope>
    <scope>DISRUPTION PHENOTYPE</scope>
</reference>
<reference key="2">
    <citation type="journal article" date="2008" name="Science">
        <title>The Physcomitrella genome reveals evolutionary insights into the conquest of land by plants.</title>
        <authorList>
            <person name="Rensing S.A."/>
            <person name="Lang D."/>
            <person name="Zimmer A.D."/>
            <person name="Terry A."/>
            <person name="Salamov A."/>
            <person name="Shapiro H."/>
            <person name="Nishiyama T."/>
            <person name="Perroud P.-F."/>
            <person name="Lindquist E.A."/>
            <person name="Kamisugi Y."/>
            <person name="Tanahashi T."/>
            <person name="Sakakibara K."/>
            <person name="Fujita T."/>
            <person name="Oishi K."/>
            <person name="Shin-I T."/>
            <person name="Kuroki Y."/>
            <person name="Toyoda A."/>
            <person name="Suzuki Y."/>
            <person name="Hashimoto S.-I."/>
            <person name="Yamaguchi K."/>
            <person name="Sugano S."/>
            <person name="Kohara Y."/>
            <person name="Fujiyama A."/>
            <person name="Anterola A."/>
            <person name="Aoki S."/>
            <person name="Ashton N."/>
            <person name="Barbazuk W.B."/>
            <person name="Barker E."/>
            <person name="Bennetzen J.L."/>
            <person name="Blankenship R."/>
            <person name="Cho S.H."/>
            <person name="Dutcher S.K."/>
            <person name="Estelle M."/>
            <person name="Fawcett J.A."/>
            <person name="Gundlach H."/>
            <person name="Hanada K."/>
            <person name="Heyl A."/>
            <person name="Hicks K.A."/>
            <person name="Hughes J."/>
            <person name="Lohr M."/>
            <person name="Mayer K."/>
            <person name="Melkozernov A."/>
            <person name="Murata T."/>
            <person name="Nelson D.R."/>
            <person name="Pils B."/>
            <person name="Prigge M."/>
            <person name="Reiss B."/>
            <person name="Renner T."/>
            <person name="Rombauts S."/>
            <person name="Rushton P.J."/>
            <person name="Sanderfoot A."/>
            <person name="Schween G."/>
            <person name="Shiu S.-H."/>
            <person name="Stueber K."/>
            <person name="Theodoulou F.L."/>
            <person name="Tu H."/>
            <person name="Van de Peer Y."/>
            <person name="Verrier P.J."/>
            <person name="Waters E."/>
            <person name="Wood A."/>
            <person name="Yang L."/>
            <person name="Cove D."/>
            <person name="Cuming A.C."/>
            <person name="Hasebe M."/>
            <person name="Lucas S."/>
            <person name="Mishler B.D."/>
            <person name="Reski R."/>
            <person name="Grigoriev I.V."/>
            <person name="Quatrano R.S."/>
            <person name="Boore J.L."/>
        </authorList>
    </citation>
    <scope>NUCLEOTIDE SEQUENCE [LARGE SCALE GENOMIC DNA]</scope>
    <source>
        <strain>cv. Gransden 2004</strain>
    </source>
</reference>
<reference key="3">
    <citation type="journal article" date="2018" name="Plant J.">
        <title>The Physcomitrella patens chromosome-scale assembly reveals moss genome structure and evolution.</title>
        <authorList>
            <person name="Lang D."/>
            <person name="Ullrich K.K."/>
            <person name="Murat F."/>
            <person name="Fuchs J."/>
            <person name="Jenkins J."/>
            <person name="Haas F.B."/>
            <person name="Piednoel M."/>
            <person name="Gundlach H."/>
            <person name="Van Bel M."/>
            <person name="Meyberg R."/>
            <person name="Vives C."/>
            <person name="Morata J."/>
            <person name="Symeonidi A."/>
            <person name="Hiss M."/>
            <person name="Muchero W."/>
            <person name="Kamisugi Y."/>
            <person name="Saleh O."/>
            <person name="Blanc G."/>
            <person name="Decker E.L."/>
            <person name="van Gessel N."/>
            <person name="Grimwood J."/>
            <person name="Hayes R.D."/>
            <person name="Graham S.W."/>
            <person name="Gunter L.E."/>
            <person name="McDaniel S.F."/>
            <person name="Hoernstein S.N.W."/>
            <person name="Larsson A."/>
            <person name="Li F.W."/>
            <person name="Perroud P.F."/>
            <person name="Phillips J."/>
            <person name="Ranjan P."/>
            <person name="Rokshar D.S."/>
            <person name="Rothfels C.J."/>
            <person name="Schneider L."/>
            <person name="Shu S."/>
            <person name="Stevenson D.W."/>
            <person name="Thummler F."/>
            <person name="Tillich M."/>
            <person name="Villarreal Aguilar J.C."/>
            <person name="Widiez T."/>
            <person name="Wong G.K."/>
            <person name="Wymore A."/>
            <person name="Zhang Y."/>
            <person name="Zimmer A.D."/>
            <person name="Quatrano R.S."/>
            <person name="Mayer K.F.X."/>
            <person name="Goodstein D."/>
            <person name="Casacuberta J.M."/>
            <person name="Vandepoele K."/>
            <person name="Reski R."/>
            <person name="Cuming A.C."/>
            <person name="Tuskan G.A."/>
            <person name="Maumus F."/>
            <person name="Salse J."/>
            <person name="Schmutz J."/>
            <person name="Rensing S.A."/>
        </authorList>
    </citation>
    <scope>GENOME REANNOTATION</scope>
    <source>
        <strain>cv. Gransden 2004</strain>
    </source>
</reference>
<organism>
    <name type="scientific">Physcomitrium patens</name>
    <name type="common">Spreading-leaved earth moss</name>
    <name type="synonym">Physcomitrella patens</name>
    <dbReference type="NCBI Taxonomy" id="3218"/>
    <lineage>
        <taxon>Eukaryota</taxon>
        <taxon>Viridiplantae</taxon>
        <taxon>Streptophyta</taxon>
        <taxon>Embryophyta</taxon>
        <taxon>Bryophyta</taxon>
        <taxon>Bryophytina</taxon>
        <taxon>Bryopsida</taxon>
        <taxon>Funariidae</taxon>
        <taxon>Funariales</taxon>
        <taxon>Funariaceae</taxon>
        <taxon>Physcomitrium</taxon>
    </lineage>
</organism>
<feature type="transit peptide" description="Chloroplast" evidence="2">
    <location>
        <begin position="1"/>
        <end position="79"/>
    </location>
</feature>
<feature type="chain" id="PRO_0000457287" description="Phenylalanine 4-monooxygenase, chloroplastic">
    <location>
        <begin position="80"/>
        <end position="394"/>
    </location>
</feature>
<feature type="region of interest" description="Disordered" evidence="3">
    <location>
        <begin position="75"/>
        <end position="97"/>
    </location>
</feature>
<feature type="binding site" evidence="1">
    <location>
        <position position="252"/>
    </location>
    <ligand>
        <name>Fe cation</name>
        <dbReference type="ChEBI" id="CHEBI:24875"/>
    </ligand>
</feature>
<feature type="binding site" evidence="1">
    <location>
        <position position="257"/>
    </location>
    <ligand>
        <name>Fe cation</name>
        <dbReference type="ChEBI" id="CHEBI:24875"/>
    </ligand>
</feature>
<feature type="binding site" evidence="1">
    <location>
        <position position="297"/>
    </location>
    <ligand>
        <name>Fe cation</name>
        <dbReference type="ChEBI" id="CHEBI:24875"/>
    </ligand>
</feature>
<sequence>MAMEVGYLRHSTTITNGLCCNCDPKPRGARRVQTRLPGTLCLVKDTFTSSKAKLKKPSQREIFLTSRKRLNQIQAVSTAEKEREADKTSTPPIPSSIHDISNGDHILGFGADLTEDHPGYHDLEYKRRRSRIADLAKIHKIGEPIPCVDYTSEEIRVWGHVLDTLVDLYPTHACKEYLNCYELFNFKPNYIPQLQELSEVLERSTGWHIRPVAGLLHPRDFLNGLAFRTFHSTQYVRHGSNPMYTPEPDICHEVLGHVPILADPEFADLAWAIGQASLGASEKDIWHLTKLYWYTVEFGTVKEGNEIKAFGAGLLSSFGELKHMRVGTDGFMPEFVELDPFKKMPKMSYKDGYQKRYFLCESFADAAAKLRAYSRSILKPEVQSIKFGDTPIRL</sequence>
<gene>
    <name evidence="7" type="ORF">PHYPA_011502</name>
</gene>
<keyword id="KW-0021">Allosteric enzyme</keyword>
<keyword id="KW-0150">Chloroplast</keyword>
<keyword id="KW-0408">Iron</keyword>
<keyword id="KW-0479">Metal-binding</keyword>
<keyword id="KW-0503">Monooxygenase</keyword>
<keyword id="KW-0560">Oxidoreductase</keyword>
<keyword id="KW-0585">Phenylalanine catabolism</keyword>
<keyword id="KW-0934">Plastid</keyword>
<keyword id="KW-1185">Reference proteome</keyword>
<keyword id="KW-0809">Transit peptide</keyword>
<comment type="function">
    <text evidence="4">Catalyzes the hydroxylation of L-phenylalanine to L-tyrosine (PubMed:20959559). Does not seem to be tetrahydropterin-dependent and shows preference for 10-formyltetrahydrofolate as cosubstrate and electron donor (PubMed:20959559).</text>
</comment>
<comment type="catalytic activity">
    <reaction evidence="4">
        <text>(6R)-L-erythro-5,6,7,8-tetrahydrobiopterin + L-phenylalanine + O2 = (4aS,6R)-4a-hydroxy-L-erythro-5,6,7,8-tetrahydrobiopterin + L-tyrosine</text>
        <dbReference type="Rhea" id="RHEA:20273"/>
        <dbReference type="ChEBI" id="CHEBI:15379"/>
        <dbReference type="ChEBI" id="CHEBI:15642"/>
        <dbReference type="ChEBI" id="CHEBI:58095"/>
        <dbReference type="ChEBI" id="CHEBI:58315"/>
        <dbReference type="ChEBI" id="CHEBI:59560"/>
        <dbReference type="EC" id="1.14.16.1"/>
    </reaction>
    <physiologicalReaction direction="left-to-right" evidence="4">
        <dbReference type="Rhea" id="RHEA:20274"/>
    </physiologicalReaction>
</comment>
<comment type="cofactor">
    <cofactor evidence="4">
        <name>Fe(2+)</name>
        <dbReference type="ChEBI" id="CHEBI:29033"/>
    </cofactor>
</comment>
<comment type="biophysicochemical properties">
    <kinetics>
        <KM evidence="4">203 uM for L-phenylalanine with (6R)-L-erythro-5,6,7,8-tetrahydrobiopterin as cosubstrate</KM>
        <KM evidence="4">950 uM for L-phenylalanine with 10-formyltetrahydrofolate as cosubstrate</KM>
        <text evidence="4">kcat is 1.16 sec(-1) with L-phenylalanine as substrate and (6R)-L-erythro-5,6,7,8-tetrahydrobiopterin as cosubstrate (PubMed:20959559). kcat is 6.89 sec(-1) with L-phenylalanine as substrate and 10-formyltetrahydrofolate as cosubstrate (PubMed:20959559).</text>
    </kinetics>
</comment>
<comment type="subunit">
    <text evidence="4">Forms monomers.</text>
</comment>
<comment type="subcellular location">
    <subcellularLocation>
        <location evidence="4">Plastid</location>
        <location evidence="4">Chloroplast</location>
    </subcellularLocation>
</comment>
<comment type="disruption phenotype">
    <text evidence="6">Mutant plants accumulate phenylalanine and caffeic acid esters.</text>
</comment>
<comment type="similarity">
    <text evidence="6">Belongs to the biopterin-dependent aromatic amino acid hydroxylase family.</text>
</comment>
<name>PH4H_PHYPA</name>
<protein>
    <recommendedName>
        <fullName evidence="6">Phenylalanine 4-monooxygenase, chloroplastic</fullName>
        <ecNumber evidence="4">1.14.16.1</ecNumber>
    </recommendedName>
    <alternativeName>
        <fullName evidence="5">Aromatic amino acid hydroxylase</fullName>
    </alternativeName>
    <alternativeName>
        <fullName evidence="5">Phenylalanine 4-hydroxylase</fullName>
    </alternativeName>
</protein>
<proteinExistence type="evidence at protein level"/>
<evidence type="ECO:0000250" key="1">
    <source>
        <dbReference type="UniProtKB" id="P04176"/>
    </source>
</evidence>
<evidence type="ECO:0000255" key="2"/>
<evidence type="ECO:0000256" key="3">
    <source>
        <dbReference type="SAM" id="MobiDB-lite"/>
    </source>
</evidence>
<evidence type="ECO:0000269" key="4">
    <source>
    </source>
</evidence>
<evidence type="ECO:0000303" key="5">
    <source>
    </source>
</evidence>
<evidence type="ECO:0000305" key="6"/>
<evidence type="ECO:0000312" key="7">
    <source>
        <dbReference type="EMBL" id="PNR49606.1"/>
    </source>
</evidence>